<comment type="similarity">
    <text evidence="1">Belongs to the bacterial ribosomal protein bL27 family.</text>
</comment>
<dbReference type="EMBL" id="CP000776">
    <property type="protein sequence ID" value="ABS52465.1"/>
    <property type="molecule type" value="Genomic_DNA"/>
</dbReference>
<dbReference type="RefSeq" id="WP_012109193.1">
    <property type="nucleotide sequence ID" value="NC_009714.1"/>
</dbReference>
<dbReference type="SMR" id="A7I2Z9"/>
<dbReference type="STRING" id="360107.CHAB381_1341"/>
<dbReference type="KEGG" id="cha:CHAB381_1341"/>
<dbReference type="eggNOG" id="COG0211">
    <property type="taxonomic scope" value="Bacteria"/>
</dbReference>
<dbReference type="HOGENOM" id="CLU_095424_4_0_7"/>
<dbReference type="OrthoDB" id="9803474at2"/>
<dbReference type="Proteomes" id="UP000002407">
    <property type="component" value="Chromosome"/>
</dbReference>
<dbReference type="GO" id="GO:0022625">
    <property type="term" value="C:cytosolic large ribosomal subunit"/>
    <property type="evidence" value="ECO:0007669"/>
    <property type="project" value="TreeGrafter"/>
</dbReference>
<dbReference type="GO" id="GO:0003735">
    <property type="term" value="F:structural constituent of ribosome"/>
    <property type="evidence" value="ECO:0007669"/>
    <property type="project" value="InterPro"/>
</dbReference>
<dbReference type="GO" id="GO:0006412">
    <property type="term" value="P:translation"/>
    <property type="evidence" value="ECO:0007669"/>
    <property type="project" value="UniProtKB-UniRule"/>
</dbReference>
<dbReference type="FunFam" id="2.40.50.100:FF:000004">
    <property type="entry name" value="50S ribosomal protein L27"/>
    <property type="match status" value="1"/>
</dbReference>
<dbReference type="Gene3D" id="2.40.50.100">
    <property type="match status" value="1"/>
</dbReference>
<dbReference type="HAMAP" id="MF_00539">
    <property type="entry name" value="Ribosomal_bL27"/>
    <property type="match status" value="1"/>
</dbReference>
<dbReference type="InterPro" id="IPR001684">
    <property type="entry name" value="Ribosomal_bL27"/>
</dbReference>
<dbReference type="InterPro" id="IPR018261">
    <property type="entry name" value="Ribosomal_bL27_CS"/>
</dbReference>
<dbReference type="NCBIfam" id="TIGR00062">
    <property type="entry name" value="L27"/>
    <property type="match status" value="1"/>
</dbReference>
<dbReference type="PANTHER" id="PTHR15893:SF0">
    <property type="entry name" value="LARGE RIBOSOMAL SUBUNIT PROTEIN BL27M"/>
    <property type="match status" value="1"/>
</dbReference>
<dbReference type="PANTHER" id="PTHR15893">
    <property type="entry name" value="RIBOSOMAL PROTEIN L27"/>
    <property type="match status" value="1"/>
</dbReference>
<dbReference type="Pfam" id="PF01016">
    <property type="entry name" value="Ribosomal_L27"/>
    <property type="match status" value="1"/>
</dbReference>
<dbReference type="PRINTS" id="PR00063">
    <property type="entry name" value="RIBOSOMALL27"/>
</dbReference>
<dbReference type="SUPFAM" id="SSF110324">
    <property type="entry name" value="Ribosomal L27 protein-like"/>
    <property type="match status" value="1"/>
</dbReference>
<dbReference type="PROSITE" id="PS00831">
    <property type="entry name" value="RIBOSOMAL_L27"/>
    <property type="match status" value="1"/>
</dbReference>
<feature type="chain" id="PRO_1000017442" description="Large ribosomal subunit protein bL27">
    <location>
        <begin position="1"/>
        <end position="85"/>
    </location>
</feature>
<name>RL27_CAMHC</name>
<protein>
    <recommendedName>
        <fullName evidence="1">Large ribosomal subunit protein bL27</fullName>
    </recommendedName>
    <alternativeName>
        <fullName evidence="2">50S ribosomal protein L27</fullName>
    </alternativeName>
</protein>
<proteinExistence type="inferred from homology"/>
<evidence type="ECO:0000255" key="1">
    <source>
        <dbReference type="HAMAP-Rule" id="MF_00539"/>
    </source>
</evidence>
<evidence type="ECO:0000305" key="2"/>
<organism>
    <name type="scientific">Campylobacter hominis (strain ATCC BAA-381 / DSM 21671 / CCUG 45161 / LMG 19568 / NCTC 13146 / CH001A)</name>
    <dbReference type="NCBI Taxonomy" id="360107"/>
    <lineage>
        <taxon>Bacteria</taxon>
        <taxon>Pseudomonadati</taxon>
        <taxon>Campylobacterota</taxon>
        <taxon>Epsilonproteobacteria</taxon>
        <taxon>Campylobacterales</taxon>
        <taxon>Campylobacteraceae</taxon>
        <taxon>Campylobacter</taxon>
    </lineage>
</organism>
<gene>
    <name evidence="1" type="primary">rpmA</name>
    <name type="ordered locus">CHAB381_1341</name>
</gene>
<accession>A7I2Z9</accession>
<keyword id="KW-1185">Reference proteome</keyword>
<keyword id="KW-0687">Ribonucleoprotein</keyword>
<keyword id="KW-0689">Ribosomal protein</keyword>
<reference key="1">
    <citation type="submission" date="2007-07" db="EMBL/GenBank/DDBJ databases">
        <title>Complete genome sequence of Campylobacter hominis ATCC BAA-381, a commensal isolated from the human gastrointestinal tract.</title>
        <authorList>
            <person name="Fouts D.E."/>
            <person name="Mongodin E.F."/>
            <person name="Puiu D."/>
            <person name="Sebastian Y."/>
            <person name="Miller W.G."/>
            <person name="Mandrell R.E."/>
            <person name="Nelson K.E."/>
        </authorList>
    </citation>
    <scope>NUCLEOTIDE SEQUENCE [LARGE SCALE GENOMIC DNA]</scope>
    <source>
        <strain>ATCC BAA-381 / DSM 21671 / CCUG 45161 / LMG 19568 / NCTC 13146 / CH001A</strain>
    </source>
</reference>
<sequence length="85" mass="9326">MAHKKGQGSTQNNRDSIGRRLGVKKFGGEFVRAGNIIIRQRGTATHAGNNVGIGTDHTIFALIDGVVKFERFDKTRKQVSVYPLS</sequence>